<gene>
    <name evidence="1" type="primary">hisS</name>
    <name type="ordered locus">Npun_R5420</name>
</gene>
<accession>B2J5J5</accession>
<protein>
    <recommendedName>
        <fullName evidence="1">Histidine--tRNA ligase</fullName>
        <ecNumber evidence="1">6.1.1.21</ecNumber>
    </recommendedName>
    <alternativeName>
        <fullName evidence="1">Histidyl-tRNA synthetase</fullName>
        <shortName evidence="1">HisRS</shortName>
    </alternativeName>
</protein>
<comment type="catalytic activity">
    <reaction evidence="1">
        <text>tRNA(His) + L-histidine + ATP = L-histidyl-tRNA(His) + AMP + diphosphate + H(+)</text>
        <dbReference type="Rhea" id="RHEA:17313"/>
        <dbReference type="Rhea" id="RHEA-COMP:9665"/>
        <dbReference type="Rhea" id="RHEA-COMP:9689"/>
        <dbReference type="ChEBI" id="CHEBI:15378"/>
        <dbReference type="ChEBI" id="CHEBI:30616"/>
        <dbReference type="ChEBI" id="CHEBI:33019"/>
        <dbReference type="ChEBI" id="CHEBI:57595"/>
        <dbReference type="ChEBI" id="CHEBI:78442"/>
        <dbReference type="ChEBI" id="CHEBI:78527"/>
        <dbReference type="ChEBI" id="CHEBI:456215"/>
        <dbReference type="EC" id="6.1.1.21"/>
    </reaction>
</comment>
<comment type="subunit">
    <text evidence="1">Homodimer.</text>
</comment>
<comment type="subcellular location">
    <subcellularLocation>
        <location evidence="1">Cytoplasm</location>
    </subcellularLocation>
</comment>
<comment type="similarity">
    <text evidence="1">Belongs to the class-II aminoacyl-tRNA synthetase family.</text>
</comment>
<reference key="1">
    <citation type="journal article" date="2013" name="Plant Physiol.">
        <title>A Nostoc punctiforme Sugar Transporter Necessary to Establish a Cyanobacterium-Plant Symbiosis.</title>
        <authorList>
            <person name="Ekman M."/>
            <person name="Picossi S."/>
            <person name="Campbell E.L."/>
            <person name="Meeks J.C."/>
            <person name="Flores E."/>
        </authorList>
    </citation>
    <scope>NUCLEOTIDE SEQUENCE [LARGE SCALE GENOMIC DNA]</scope>
    <source>
        <strain>ATCC 29133 / PCC 73102</strain>
    </source>
</reference>
<organism>
    <name type="scientific">Nostoc punctiforme (strain ATCC 29133 / PCC 73102)</name>
    <dbReference type="NCBI Taxonomy" id="63737"/>
    <lineage>
        <taxon>Bacteria</taxon>
        <taxon>Bacillati</taxon>
        <taxon>Cyanobacteriota</taxon>
        <taxon>Cyanophyceae</taxon>
        <taxon>Nostocales</taxon>
        <taxon>Nostocaceae</taxon>
        <taxon>Nostoc</taxon>
    </lineage>
</organism>
<proteinExistence type="inferred from homology"/>
<sequence>MAKGDKINFSTPSGFPEFLPSEKRLELYLLDIIRRVFESYGFTPIETPAVERLEVLQAKGNQGDNIIYGIDPILPPNRQAEKDKSGETGKDKSGETGSEARALKFDQTVPLAAYIARHLNELIFPFARYQTDMVFRGERAKDGRFRQFRQCDIDVVARRELSLLYDAQMPAIITEIFEAINIGDFLIRINNRKVLTGFFKSVGITEDKIKSCINIVDNLEKIGESKVKQELEKEGVSGEQTQKIIDFIKIDGSVDEVLDKLKHLTLNLPETEQLSLGISELETVIAGVRNLGVTENRFCIDLSIARGLDYYTGTVYETTLLGHEALGSICSGGRYEELVGVFLGEKMPGVGISIGLTRLISRLLKAGILSTLAATPAQVMVVNMQEDLMPTYLKVSQHLRQAGINVITNFDKRPLGKQFQLADKQGIQFCVIIGSEEAAAQKSSLKDLKSGEQVEVLLVNLAEEVKRRLS</sequence>
<feature type="chain" id="PRO_1000095574" description="Histidine--tRNA ligase">
    <location>
        <begin position="1"/>
        <end position="470"/>
    </location>
</feature>
<feature type="region of interest" description="Disordered" evidence="2">
    <location>
        <begin position="69"/>
        <end position="99"/>
    </location>
</feature>
<feature type="compositionally biased region" description="Basic and acidic residues" evidence="2">
    <location>
        <begin position="79"/>
        <end position="94"/>
    </location>
</feature>
<name>SYH_NOSP7</name>
<keyword id="KW-0030">Aminoacyl-tRNA synthetase</keyword>
<keyword id="KW-0067">ATP-binding</keyword>
<keyword id="KW-0963">Cytoplasm</keyword>
<keyword id="KW-0436">Ligase</keyword>
<keyword id="KW-0547">Nucleotide-binding</keyword>
<keyword id="KW-0648">Protein biosynthesis</keyword>
<keyword id="KW-1185">Reference proteome</keyword>
<dbReference type="EC" id="6.1.1.21" evidence="1"/>
<dbReference type="EMBL" id="CP001037">
    <property type="protein sequence ID" value="ACC83727.1"/>
    <property type="molecule type" value="Genomic_DNA"/>
</dbReference>
<dbReference type="RefSeq" id="WP_012411674.1">
    <property type="nucleotide sequence ID" value="NC_010628.1"/>
</dbReference>
<dbReference type="SMR" id="B2J5J5"/>
<dbReference type="STRING" id="63737.Npun_R5420"/>
<dbReference type="EnsemblBacteria" id="ACC83727">
    <property type="protein sequence ID" value="ACC83727"/>
    <property type="gene ID" value="Npun_R5420"/>
</dbReference>
<dbReference type="KEGG" id="npu:Npun_R5420"/>
<dbReference type="eggNOG" id="COG0124">
    <property type="taxonomic scope" value="Bacteria"/>
</dbReference>
<dbReference type="HOGENOM" id="CLU_025113_3_0_3"/>
<dbReference type="OrthoDB" id="9800814at2"/>
<dbReference type="PhylomeDB" id="B2J5J5"/>
<dbReference type="Proteomes" id="UP000001191">
    <property type="component" value="Chromosome"/>
</dbReference>
<dbReference type="GO" id="GO:0005737">
    <property type="term" value="C:cytoplasm"/>
    <property type="evidence" value="ECO:0007669"/>
    <property type="project" value="UniProtKB-SubCell"/>
</dbReference>
<dbReference type="GO" id="GO:0005524">
    <property type="term" value="F:ATP binding"/>
    <property type="evidence" value="ECO:0007669"/>
    <property type="project" value="UniProtKB-UniRule"/>
</dbReference>
<dbReference type="GO" id="GO:0004821">
    <property type="term" value="F:histidine-tRNA ligase activity"/>
    <property type="evidence" value="ECO:0007669"/>
    <property type="project" value="UniProtKB-UniRule"/>
</dbReference>
<dbReference type="GO" id="GO:0006427">
    <property type="term" value="P:histidyl-tRNA aminoacylation"/>
    <property type="evidence" value="ECO:0007669"/>
    <property type="project" value="UniProtKB-UniRule"/>
</dbReference>
<dbReference type="CDD" id="cd00773">
    <property type="entry name" value="HisRS-like_core"/>
    <property type="match status" value="1"/>
</dbReference>
<dbReference type="CDD" id="cd00859">
    <property type="entry name" value="HisRS_anticodon"/>
    <property type="match status" value="1"/>
</dbReference>
<dbReference type="Gene3D" id="3.40.50.800">
    <property type="entry name" value="Anticodon-binding domain"/>
    <property type="match status" value="1"/>
</dbReference>
<dbReference type="Gene3D" id="3.30.930.10">
    <property type="entry name" value="Bira Bifunctional Protein, Domain 2"/>
    <property type="match status" value="1"/>
</dbReference>
<dbReference type="HAMAP" id="MF_00127">
    <property type="entry name" value="His_tRNA_synth"/>
    <property type="match status" value="1"/>
</dbReference>
<dbReference type="InterPro" id="IPR006195">
    <property type="entry name" value="aa-tRNA-synth_II"/>
</dbReference>
<dbReference type="InterPro" id="IPR045864">
    <property type="entry name" value="aa-tRNA-synth_II/BPL/LPL"/>
</dbReference>
<dbReference type="InterPro" id="IPR004154">
    <property type="entry name" value="Anticodon-bd"/>
</dbReference>
<dbReference type="InterPro" id="IPR036621">
    <property type="entry name" value="Anticodon-bd_dom_sf"/>
</dbReference>
<dbReference type="InterPro" id="IPR015807">
    <property type="entry name" value="His-tRNA-ligase"/>
</dbReference>
<dbReference type="InterPro" id="IPR041715">
    <property type="entry name" value="HisRS-like_core"/>
</dbReference>
<dbReference type="InterPro" id="IPR004516">
    <property type="entry name" value="HisRS/HisZ"/>
</dbReference>
<dbReference type="InterPro" id="IPR033656">
    <property type="entry name" value="HisRS_anticodon"/>
</dbReference>
<dbReference type="NCBIfam" id="TIGR00442">
    <property type="entry name" value="hisS"/>
    <property type="match status" value="1"/>
</dbReference>
<dbReference type="PANTHER" id="PTHR11476:SF7">
    <property type="entry name" value="HISTIDINE--TRNA LIGASE"/>
    <property type="match status" value="1"/>
</dbReference>
<dbReference type="PANTHER" id="PTHR11476">
    <property type="entry name" value="HISTIDYL-TRNA SYNTHETASE"/>
    <property type="match status" value="1"/>
</dbReference>
<dbReference type="Pfam" id="PF03129">
    <property type="entry name" value="HGTP_anticodon"/>
    <property type="match status" value="1"/>
</dbReference>
<dbReference type="Pfam" id="PF13393">
    <property type="entry name" value="tRNA-synt_His"/>
    <property type="match status" value="1"/>
</dbReference>
<dbReference type="PIRSF" id="PIRSF001549">
    <property type="entry name" value="His-tRNA_synth"/>
    <property type="match status" value="1"/>
</dbReference>
<dbReference type="SUPFAM" id="SSF52954">
    <property type="entry name" value="Class II aaRS ABD-related"/>
    <property type="match status" value="1"/>
</dbReference>
<dbReference type="SUPFAM" id="SSF55681">
    <property type="entry name" value="Class II aaRS and biotin synthetases"/>
    <property type="match status" value="1"/>
</dbReference>
<dbReference type="PROSITE" id="PS50862">
    <property type="entry name" value="AA_TRNA_LIGASE_II"/>
    <property type="match status" value="1"/>
</dbReference>
<evidence type="ECO:0000255" key="1">
    <source>
        <dbReference type="HAMAP-Rule" id="MF_00127"/>
    </source>
</evidence>
<evidence type="ECO:0000256" key="2">
    <source>
        <dbReference type="SAM" id="MobiDB-lite"/>
    </source>
</evidence>